<reference key="1">
    <citation type="journal article" date="1990" name="Virology">
        <title>The complete DNA sequence of vaccinia virus.</title>
        <authorList>
            <person name="Goebel S.J."/>
            <person name="Johnson G.P."/>
            <person name="Perkus M.E."/>
            <person name="Davis S.W."/>
            <person name="Winslow J.P."/>
            <person name="Paoletti E."/>
        </authorList>
    </citation>
    <scope>NUCLEOTIDE SEQUENCE [LARGE SCALE GENOMIC DNA]</scope>
</reference>
<reference key="2">
    <citation type="journal article" date="1990" name="Virology">
        <title>Appendix to 'The complete DNA sequence of vaccinia virus'.</title>
        <authorList>
            <person name="Goebel S.J."/>
            <person name="Johnson G.P."/>
            <person name="Perkus M.E."/>
            <person name="Davis S.W."/>
            <person name="Winslow J.P."/>
            <person name="Paoletti E."/>
        </authorList>
    </citation>
    <scope>NUCLEOTIDE SEQUENCE [LARGE SCALE GENOMIC DNA]</scope>
</reference>
<keyword id="KW-1169">Fusion of virus membrane with host cell membrane</keyword>
<keyword id="KW-1168">Fusion of virus membrane with host membrane</keyword>
<keyword id="KW-0472">Membrane</keyword>
<keyword id="KW-1185">Reference proteome</keyword>
<keyword id="KW-0735">Signal-anchor</keyword>
<keyword id="KW-0812">Transmembrane</keyword>
<keyword id="KW-1133">Transmembrane helix</keyword>
<keyword id="KW-0261">Viral envelope protein</keyword>
<keyword id="KW-1162">Viral penetration into host cytoplasm</keyword>
<keyword id="KW-0946">Virion</keyword>
<keyword id="KW-1160">Virus entry into host cell</keyword>
<organismHost>
    <name type="scientific">Homo sapiens</name>
    <name type="common">Human</name>
    <dbReference type="NCBI Taxonomy" id="9606"/>
</organismHost>
<sequence length="133" mass="15158">MTDEQIYAFCDANKDDIRCKCIYPDKSIVRIGIDTRLPYYCWYEPCKRSDALLPASLKKNITKCNVSDCTISLGNVSITDSKLDVNNVCDSKRVATENIAVRYLNQEIRYPIIDIKWLPIGLLALAILILAFF</sequence>
<feature type="chain" id="PRO_0000099594" description="Protein OPG104">
    <location>
        <begin position="1"/>
        <end position="133"/>
    </location>
</feature>
<feature type="topological domain" description="Virion surface" evidence="1">
    <location>
        <begin position="1"/>
        <end position="111"/>
    </location>
</feature>
<feature type="transmembrane region" description="Helical; Signal-anchor" evidence="3">
    <location>
        <begin position="112"/>
        <end position="132"/>
    </location>
</feature>
<comment type="function">
    <text evidence="2">Envelope protein part of the entry-fusion complex responsible for the virus membrane fusion with host cell membrane during virus entry. Also plays a role in cell-cell fusion (syncytium formation).</text>
</comment>
<comment type="subunit">
    <text evidence="2">Part of a stable entry-fusion complex (EFC) which is at least composed of proteins OPG143, OPG147, OPG155, OPG086, OPG094, OPG107, OPG104, and OPG099. Formation of the viral membrane is necessary for the assembly of the complex.</text>
</comment>
<comment type="subcellular location">
    <subcellularLocation>
        <location evidence="2">Virion membrane</location>
        <topology evidence="2">Single-pass membrane protein</topology>
    </subcellularLocation>
    <text evidence="2">Component of the mature virion (MV) membrane. The mature virion is located in the cytoplasm of infected cells and is probably released by cell lysis.</text>
</comment>
<comment type="similarity">
    <text evidence="4">Belongs to the orthopoxvirus OPG104 family.</text>
</comment>
<dbReference type="EMBL" id="M35027">
    <property type="protein sequence ID" value="AAA48085.1"/>
    <property type="molecule type" value="Genomic_DNA"/>
</dbReference>
<dbReference type="PIR" id="H42513">
    <property type="entry name" value="H42513"/>
</dbReference>
<dbReference type="SMR" id="P21083"/>
<dbReference type="Proteomes" id="UP000008269">
    <property type="component" value="Segment"/>
</dbReference>
<dbReference type="GO" id="GO:0016020">
    <property type="term" value="C:membrane"/>
    <property type="evidence" value="ECO:0007669"/>
    <property type="project" value="UniProtKB-KW"/>
</dbReference>
<dbReference type="GO" id="GO:0019031">
    <property type="term" value="C:viral envelope"/>
    <property type="evidence" value="ECO:0007669"/>
    <property type="project" value="UniProtKB-KW"/>
</dbReference>
<dbReference type="GO" id="GO:0055036">
    <property type="term" value="C:virion membrane"/>
    <property type="evidence" value="ECO:0007669"/>
    <property type="project" value="UniProtKB-SubCell"/>
</dbReference>
<dbReference type="GO" id="GO:0019064">
    <property type="term" value="P:fusion of virus membrane with host plasma membrane"/>
    <property type="evidence" value="ECO:0007669"/>
    <property type="project" value="UniProtKB-KW"/>
</dbReference>
<dbReference type="GO" id="GO:0046718">
    <property type="term" value="P:symbiont entry into host cell"/>
    <property type="evidence" value="ECO:0007669"/>
    <property type="project" value="UniProtKB-KW"/>
</dbReference>
<dbReference type="InterPro" id="IPR004251">
    <property type="entry name" value="Pox_virus_G9/A16"/>
</dbReference>
<dbReference type="Pfam" id="PF03003">
    <property type="entry name" value="Pox_G9-A16"/>
    <property type="match status" value="1"/>
</dbReference>
<gene>
    <name type="primary">OPG104</name>
    <name type="ORF">J5L</name>
</gene>
<organism>
    <name type="scientific">Vaccinia virus (strain Copenhagen)</name>
    <name type="common">VACV</name>
    <dbReference type="NCBI Taxonomy" id="10249"/>
    <lineage>
        <taxon>Viruses</taxon>
        <taxon>Varidnaviria</taxon>
        <taxon>Bamfordvirae</taxon>
        <taxon>Nucleocytoviricota</taxon>
        <taxon>Pokkesviricetes</taxon>
        <taxon>Chitovirales</taxon>
        <taxon>Poxviridae</taxon>
        <taxon>Chordopoxvirinae</taxon>
        <taxon>Orthopoxvirus</taxon>
        <taxon>Vaccinia virus</taxon>
    </lineage>
</organism>
<accession>P21083</accession>
<proteinExistence type="inferred from homology"/>
<name>PG104_VACCC</name>
<evidence type="ECO:0000250" key="1"/>
<evidence type="ECO:0000250" key="2">
    <source>
        <dbReference type="UniProtKB" id="P07618"/>
    </source>
</evidence>
<evidence type="ECO:0000255" key="3"/>
<evidence type="ECO:0000305" key="4"/>
<protein>
    <recommendedName>
        <fullName>Protein OPG104</fullName>
    </recommendedName>
    <alternativeName>
        <fullName>Protein J5</fullName>
    </alternativeName>
</protein>